<dbReference type="EC" id="2.1.1.45" evidence="6"/>
<dbReference type="EMBL" id="L12138">
    <property type="protein sequence ID" value="AAA92340.1"/>
    <property type="molecule type" value="mRNA"/>
</dbReference>
<dbReference type="EMBL" id="BC126093">
    <property type="protein sequence ID" value="AAI26094.1"/>
    <property type="molecule type" value="mRNA"/>
</dbReference>
<dbReference type="PIR" id="S53715">
    <property type="entry name" value="S53715"/>
</dbReference>
<dbReference type="RefSeq" id="NP_062052.1">
    <property type="nucleotide sequence ID" value="NM_019179.2"/>
</dbReference>
<dbReference type="PDB" id="1RTS">
    <property type="method" value="X-ray"/>
    <property type="resolution" value="3.30 A"/>
    <property type="chains" value="A/B=1-307"/>
</dbReference>
<dbReference type="PDB" id="2TSR">
    <property type="method" value="X-ray"/>
    <property type="resolution" value="2.60 A"/>
    <property type="chains" value="A/B/C/D=1-307"/>
</dbReference>
<dbReference type="PDBsum" id="1RTS"/>
<dbReference type="PDBsum" id="2TSR"/>
<dbReference type="SMR" id="P45352"/>
<dbReference type="BioGRID" id="247934">
    <property type="interactions" value="1"/>
</dbReference>
<dbReference type="FunCoup" id="P45352">
    <property type="interactions" value="1514"/>
</dbReference>
<dbReference type="STRING" id="10116.ENSRNOP00000053086"/>
<dbReference type="BindingDB" id="P45352"/>
<dbReference type="ChEMBL" id="CHEMBL4341"/>
<dbReference type="DrugCentral" id="P45352"/>
<dbReference type="PhosphoSitePlus" id="P45352"/>
<dbReference type="jPOST" id="P45352"/>
<dbReference type="PaxDb" id="10116-ENSRNOP00000053086"/>
<dbReference type="Ensembl" id="ENSRNOT00000056243.5">
    <property type="protein sequence ID" value="ENSRNOP00000053086.2"/>
    <property type="gene ID" value="ENSRNOG00000037225.5"/>
</dbReference>
<dbReference type="GeneID" id="29261"/>
<dbReference type="KEGG" id="rno:29261"/>
<dbReference type="AGR" id="RGD:3921"/>
<dbReference type="CTD" id="7298"/>
<dbReference type="RGD" id="3921">
    <property type="gene designation" value="Tyms"/>
</dbReference>
<dbReference type="eggNOG" id="KOG0673">
    <property type="taxonomic scope" value="Eukaryota"/>
</dbReference>
<dbReference type="GeneTree" id="ENSGT00390000014786"/>
<dbReference type="HOGENOM" id="CLU_021669_0_2_1"/>
<dbReference type="InParanoid" id="P45352"/>
<dbReference type="OMA" id="AYGRFWR"/>
<dbReference type="OrthoDB" id="766at2759"/>
<dbReference type="PhylomeDB" id="P45352"/>
<dbReference type="TreeFam" id="TF353027"/>
<dbReference type="Reactome" id="R-RNO-499943">
    <property type="pathway name" value="Interconversion of nucleotide di- and triphosphates"/>
</dbReference>
<dbReference type="SABIO-RK" id="P45352"/>
<dbReference type="UniPathway" id="UPA00575"/>
<dbReference type="EvolutionaryTrace" id="P45352"/>
<dbReference type="PRO" id="PR:P45352"/>
<dbReference type="Proteomes" id="UP000002494">
    <property type="component" value="Chromosome 9"/>
</dbReference>
<dbReference type="Bgee" id="ENSRNOG00000037225">
    <property type="expression patterns" value="Expressed in thymus and 19 other cell types or tissues"/>
</dbReference>
<dbReference type="GO" id="GO:0005737">
    <property type="term" value="C:cytoplasm"/>
    <property type="evidence" value="ECO:0000250"/>
    <property type="project" value="UniProtKB"/>
</dbReference>
<dbReference type="GO" id="GO:0005829">
    <property type="term" value="C:cytosol"/>
    <property type="evidence" value="ECO:0000318"/>
    <property type="project" value="GO_Central"/>
</dbReference>
<dbReference type="GO" id="GO:0005743">
    <property type="term" value="C:mitochondrial inner membrane"/>
    <property type="evidence" value="ECO:0000250"/>
    <property type="project" value="UniProtKB"/>
</dbReference>
<dbReference type="GO" id="GO:0005759">
    <property type="term" value="C:mitochondrial matrix"/>
    <property type="evidence" value="ECO:0000250"/>
    <property type="project" value="UniProtKB"/>
</dbReference>
<dbReference type="GO" id="GO:0005739">
    <property type="term" value="C:mitochondrion"/>
    <property type="evidence" value="ECO:0000266"/>
    <property type="project" value="RGD"/>
</dbReference>
<dbReference type="GO" id="GO:0005634">
    <property type="term" value="C:nucleus"/>
    <property type="evidence" value="ECO:0000250"/>
    <property type="project" value="UniProtKB"/>
</dbReference>
<dbReference type="GO" id="GO:0005542">
    <property type="term" value="F:folic acid binding"/>
    <property type="evidence" value="ECO:0000314"/>
    <property type="project" value="RGD"/>
</dbReference>
<dbReference type="GO" id="GO:1901363">
    <property type="term" value="F:heterocyclic compound binding"/>
    <property type="evidence" value="ECO:0000353"/>
    <property type="project" value="RGD"/>
</dbReference>
<dbReference type="GO" id="GO:0003729">
    <property type="term" value="F:mRNA binding"/>
    <property type="evidence" value="ECO:0000353"/>
    <property type="project" value="RGD"/>
</dbReference>
<dbReference type="GO" id="GO:0000900">
    <property type="term" value="F:mRNA regulatory element binding translation repressor activity"/>
    <property type="evidence" value="ECO:0000266"/>
    <property type="project" value="RGD"/>
</dbReference>
<dbReference type="GO" id="GO:0042803">
    <property type="term" value="F:protein homodimerization activity"/>
    <property type="evidence" value="ECO:0000314"/>
    <property type="project" value="RGD"/>
</dbReference>
<dbReference type="GO" id="GO:1990825">
    <property type="term" value="F:sequence-specific mRNA binding"/>
    <property type="evidence" value="ECO:0000266"/>
    <property type="project" value="RGD"/>
</dbReference>
<dbReference type="GO" id="GO:0004799">
    <property type="term" value="F:thymidylate synthase activity"/>
    <property type="evidence" value="ECO:0000314"/>
    <property type="project" value="RGD"/>
</dbReference>
<dbReference type="GO" id="GO:0051216">
    <property type="term" value="P:cartilage development"/>
    <property type="evidence" value="ECO:0000270"/>
    <property type="project" value="RGD"/>
</dbReference>
<dbReference type="GO" id="GO:0007623">
    <property type="term" value="P:circadian rhythm"/>
    <property type="evidence" value="ECO:0000270"/>
    <property type="project" value="RGD"/>
</dbReference>
<dbReference type="GO" id="GO:0048589">
    <property type="term" value="P:developmental growth"/>
    <property type="evidence" value="ECO:0000270"/>
    <property type="project" value="RGD"/>
</dbReference>
<dbReference type="GO" id="GO:0006231">
    <property type="term" value="P:dTMP biosynthetic process"/>
    <property type="evidence" value="ECO:0000314"/>
    <property type="project" value="RGD"/>
</dbReference>
<dbReference type="GO" id="GO:0006235">
    <property type="term" value="P:dTTP biosynthetic process"/>
    <property type="evidence" value="ECO:0007669"/>
    <property type="project" value="UniProtKB-UniPathway"/>
</dbReference>
<dbReference type="GO" id="GO:0060574">
    <property type="term" value="P:intestinal epithelial cell maturation"/>
    <property type="evidence" value="ECO:0000270"/>
    <property type="project" value="RGD"/>
</dbReference>
<dbReference type="GO" id="GO:0097421">
    <property type="term" value="P:liver regeneration"/>
    <property type="evidence" value="ECO:0000270"/>
    <property type="project" value="RGD"/>
</dbReference>
<dbReference type="GO" id="GO:0032259">
    <property type="term" value="P:methylation"/>
    <property type="evidence" value="ECO:0007669"/>
    <property type="project" value="UniProtKB-KW"/>
</dbReference>
<dbReference type="GO" id="GO:0017148">
    <property type="term" value="P:negative regulation of translation"/>
    <property type="evidence" value="ECO:0000266"/>
    <property type="project" value="RGD"/>
</dbReference>
<dbReference type="GO" id="GO:0006206">
    <property type="term" value="P:pyrimidine nucleobase metabolic process"/>
    <property type="evidence" value="ECO:0000270"/>
    <property type="project" value="RGD"/>
</dbReference>
<dbReference type="GO" id="GO:0006417">
    <property type="term" value="P:regulation of translation"/>
    <property type="evidence" value="ECO:0000314"/>
    <property type="project" value="RGD"/>
</dbReference>
<dbReference type="GO" id="GO:0034097">
    <property type="term" value="P:response to cytokine"/>
    <property type="evidence" value="ECO:0000270"/>
    <property type="project" value="RGD"/>
</dbReference>
<dbReference type="GO" id="GO:0045471">
    <property type="term" value="P:response to ethanol"/>
    <property type="evidence" value="ECO:0000270"/>
    <property type="project" value="RGD"/>
</dbReference>
<dbReference type="GO" id="GO:0051593">
    <property type="term" value="P:response to folic acid"/>
    <property type="evidence" value="ECO:0000270"/>
    <property type="project" value="RGD"/>
</dbReference>
<dbReference type="GO" id="GO:0051384">
    <property type="term" value="P:response to glucocorticoid"/>
    <property type="evidence" value="ECO:0000270"/>
    <property type="project" value="RGD"/>
</dbReference>
<dbReference type="GO" id="GO:0032570">
    <property type="term" value="P:response to progesterone"/>
    <property type="evidence" value="ECO:0000270"/>
    <property type="project" value="RGD"/>
</dbReference>
<dbReference type="GO" id="GO:0009636">
    <property type="term" value="P:response to toxic substance"/>
    <property type="evidence" value="ECO:0000270"/>
    <property type="project" value="RGD"/>
</dbReference>
<dbReference type="GO" id="GO:0033189">
    <property type="term" value="P:response to vitamin A"/>
    <property type="evidence" value="ECO:0000270"/>
    <property type="project" value="RGD"/>
</dbReference>
<dbReference type="GO" id="GO:0009410">
    <property type="term" value="P:response to xenobiotic stimulus"/>
    <property type="evidence" value="ECO:0000270"/>
    <property type="project" value="RGD"/>
</dbReference>
<dbReference type="GO" id="GO:0035999">
    <property type="term" value="P:tetrahydrofolate interconversion"/>
    <property type="evidence" value="ECO:0000266"/>
    <property type="project" value="RGD"/>
</dbReference>
<dbReference type="GO" id="GO:0046653">
    <property type="term" value="P:tetrahydrofolate metabolic process"/>
    <property type="evidence" value="ECO:0000270"/>
    <property type="project" value="RGD"/>
</dbReference>
<dbReference type="GO" id="GO:0019860">
    <property type="term" value="P:uracil metabolic process"/>
    <property type="evidence" value="ECO:0000270"/>
    <property type="project" value="RGD"/>
</dbReference>
<dbReference type="CDD" id="cd00351">
    <property type="entry name" value="TS_Pyrimidine_HMase"/>
    <property type="match status" value="1"/>
</dbReference>
<dbReference type="DisProt" id="DP02739"/>
<dbReference type="FunFam" id="3.30.572.10:FF:000007">
    <property type="entry name" value="thymidylate synthase isoform X2"/>
    <property type="match status" value="1"/>
</dbReference>
<dbReference type="Gene3D" id="3.30.572.10">
    <property type="entry name" value="Thymidylate synthase/dCMP hydroxymethylase domain"/>
    <property type="match status" value="1"/>
</dbReference>
<dbReference type="HAMAP" id="MF_00008">
    <property type="entry name" value="Thymidy_synth_bact"/>
    <property type="match status" value="1"/>
</dbReference>
<dbReference type="InterPro" id="IPR045097">
    <property type="entry name" value="Thymidate_synth/dCMP_Mease"/>
</dbReference>
<dbReference type="InterPro" id="IPR023451">
    <property type="entry name" value="Thymidate_synth/dCMP_Mease_dom"/>
</dbReference>
<dbReference type="InterPro" id="IPR036926">
    <property type="entry name" value="Thymidate_synth/dCMP_Mease_sf"/>
</dbReference>
<dbReference type="InterPro" id="IPR000398">
    <property type="entry name" value="Thymidylate_synthase"/>
</dbReference>
<dbReference type="InterPro" id="IPR020940">
    <property type="entry name" value="Thymidylate_synthase_AS"/>
</dbReference>
<dbReference type="NCBIfam" id="NF002497">
    <property type="entry name" value="PRK01827.1-3"/>
    <property type="match status" value="1"/>
</dbReference>
<dbReference type="NCBIfam" id="TIGR03284">
    <property type="entry name" value="thym_sym"/>
    <property type="match status" value="1"/>
</dbReference>
<dbReference type="PANTHER" id="PTHR11548:SF2">
    <property type="entry name" value="THYMIDYLATE SYNTHASE"/>
    <property type="match status" value="1"/>
</dbReference>
<dbReference type="PANTHER" id="PTHR11548">
    <property type="entry name" value="THYMIDYLATE SYNTHASE 1"/>
    <property type="match status" value="1"/>
</dbReference>
<dbReference type="Pfam" id="PF00303">
    <property type="entry name" value="Thymidylat_synt"/>
    <property type="match status" value="1"/>
</dbReference>
<dbReference type="PRINTS" id="PR00108">
    <property type="entry name" value="THYMDSNTHASE"/>
</dbReference>
<dbReference type="SUPFAM" id="SSF55831">
    <property type="entry name" value="Thymidylate synthase/dCMP hydroxymethylase"/>
    <property type="match status" value="1"/>
</dbReference>
<dbReference type="PROSITE" id="PS00091">
    <property type="entry name" value="THYMIDYLATE_SYNTHASE"/>
    <property type="match status" value="1"/>
</dbReference>
<organism>
    <name type="scientific">Rattus norvegicus</name>
    <name type="common">Rat</name>
    <dbReference type="NCBI Taxonomy" id="10116"/>
    <lineage>
        <taxon>Eukaryota</taxon>
        <taxon>Metazoa</taxon>
        <taxon>Chordata</taxon>
        <taxon>Craniata</taxon>
        <taxon>Vertebrata</taxon>
        <taxon>Euteleostomi</taxon>
        <taxon>Mammalia</taxon>
        <taxon>Eutheria</taxon>
        <taxon>Euarchontoglires</taxon>
        <taxon>Glires</taxon>
        <taxon>Rodentia</taxon>
        <taxon>Myomorpha</taxon>
        <taxon>Muroidea</taxon>
        <taxon>Muridae</taxon>
        <taxon>Murinae</taxon>
        <taxon>Rattus</taxon>
    </lineage>
</organism>
<proteinExistence type="evidence at protein level"/>
<comment type="function">
    <text evidence="6">Catalyzes the reductive methylation of 2'-deoxyuridine 5'-monophosphate (dUMP) to thymidine 5'-monophosphate (dTMP), using the cosubstrate, 5,10- methylenetetrahydrofolate (CH2H4folate) as a 1-carbon donor and reductant and contributes to the de novo mitochondrial thymidylate biosynthesis pathway.</text>
</comment>
<comment type="catalytic activity">
    <reaction evidence="6">
        <text>dUMP + (6R)-5,10-methylene-5,6,7,8-tetrahydrofolate = 7,8-dihydrofolate + dTMP</text>
        <dbReference type="Rhea" id="RHEA:12104"/>
        <dbReference type="ChEBI" id="CHEBI:15636"/>
        <dbReference type="ChEBI" id="CHEBI:57451"/>
        <dbReference type="ChEBI" id="CHEBI:63528"/>
        <dbReference type="ChEBI" id="CHEBI:246422"/>
        <dbReference type="EC" id="2.1.1.45"/>
    </reaction>
    <physiologicalReaction direction="left-to-right" evidence="6">
        <dbReference type="Rhea" id="RHEA:12105"/>
    </physiologicalReaction>
</comment>
<comment type="pathway">
    <text evidence="6">Pyrimidine metabolism; dTTP biosynthesis.</text>
</comment>
<comment type="subunit">
    <text evidence="4">Homodimer.</text>
</comment>
<comment type="subcellular location">
    <subcellularLocation>
        <location evidence="1">Nucleus</location>
    </subcellularLocation>
    <subcellularLocation>
        <location evidence="1">Cytoplasm</location>
    </subcellularLocation>
    <subcellularLocation>
        <location evidence="1">Mitochondrion</location>
    </subcellularLocation>
    <subcellularLocation>
        <location evidence="1">Mitochondrion matrix</location>
    </subcellularLocation>
    <subcellularLocation>
        <location evidence="1">Mitochondrion inner membrane</location>
    </subcellularLocation>
</comment>
<comment type="similarity">
    <text evidence="5">Belongs to the thymidylate synthase family.</text>
</comment>
<feature type="chain" id="PRO_0000140903" description="Thymidylate synthase">
    <location>
        <begin position="1"/>
        <end position="307"/>
    </location>
</feature>
<feature type="region of interest" description="Disordered" evidence="3">
    <location>
        <begin position="1"/>
        <end position="22"/>
    </location>
</feature>
<feature type="compositionally biased region" description="Polar residues" evidence="3">
    <location>
        <begin position="7"/>
        <end position="16"/>
    </location>
</feature>
<feature type="active site" description="Nucleophile" evidence="2">
    <location>
        <position position="189"/>
    </location>
</feature>
<feature type="binding site" description="in other chain" evidence="4 7 8">
    <location>
        <position position="44"/>
    </location>
    <ligand>
        <name>dUMP</name>
        <dbReference type="ChEBI" id="CHEBI:246422"/>
        <note>ligand shared between dimeric partners</note>
    </ligand>
</feature>
<feature type="binding site" evidence="4 7 8">
    <location>
        <begin position="169"/>
        <end position="170"/>
    </location>
    <ligand>
        <name>dUMP</name>
        <dbReference type="ChEBI" id="CHEBI:246422"/>
        <note>ligand shared between dimeric partners</note>
    </ligand>
</feature>
<feature type="binding site" description="in other chain" evidence="4 7 8">
    <location>
        <begin position="189"/>
        <end position="190"/>
    </location>
    <ligand>
        <name>dUMP</name>
        <dbReference type="ChEBI" id="CHEBI:246422"/>
        <note>ligand shared between dimeric partners</note>
    </ligand>
</feature>
<feature type="binding site" description="in other chain" evidence="4 7 8">
    <location>
        <begin position="209"/>
        <end position="212"/>
    </location>
    <ligand>
        <name>dUMP</name>
        <dbReference type="ChEBI" id="CHEBI:246422"/>
        <note>ligand shared between dimeric partners</note>
    </ligand>
</feature>
<feature type="binding site" evidence="2">
    <location>
        <position position="212"/>
    </location>
    <ligand>
        <name>(6R)-5,10-methylene-5,6,7,8-tetrahydrofolate</name>
        <dbReference type="ChEBI" id="CHEBI:15636"/>
    </ligand>
</feature>
<feature type="binding site" description="in other chain" evidence="4 7 8">
    <location>
        <position position="220"/>
    </location>
    <ligand>
        <name>dUMP</name>
        <dbReference type="ChEBI" id="CHEBI:246422"/>
        <note>ligand shared between dimeric partners</note>
    </ligand>
</feature>
<feature type="binding site" description="in other chain" evidence="4 7 8">
    <location>
        <begin position="250"/>
        <end position="252"/>
    </location>
    <ligand>
        <name>dUMP</name>
        <dbReference type="ChEBI" id="CHEBI:246422"/>
        <note>ligand shared between dimeric partners</note>
    </ligand>
</feature>
<feature type="binding site" evidence="2">
    <location>
        <position position="306"/>
    </location>
    <ligand>
        <name>(6R)-5,10-methylene-5,6,7,8-tetrahydrofolate</name>
        <dbReference type="ChEBI" id="CHEBI:15636"/>
    </ligand>
</feature>
<feature type="modified residue" description="Phosphoserine" evidence="1">
    <location>
        <position position="108"/>
    </location>
</feature>
<feature type="cross-link" description="Glycyl lysine isopeptide (Lys-Gly) (interchain with G-Cter in SUMO2)" evidence="1">
    <location>
        <position position="286"/>
    </location>
</feature>
<feature type="cross-link" description="Glycyl lysine isopeptide (Lys-Gly) (interchain with G-Cter in SUMO2)" evidence="1">
    <location>
        <position position="302"/>
    </location>
</feature>
<feature type="helix" evidence="10">
    <location>
        <begin position="24"/>
        <end position="37"/>
    </location>
</feature>
<feature type="strand" evidence="10">
    <location>
        <begin position="39"/>
        <end position="41"/>
    </location>
</feature>
<feature type="strand" evidence="9">
    <location>
        <begin position="44"/>
        <end position="46"/>
    </location>
</feature>
<feature type="strand" evidence="10">
    <location>
        <begin position="49"/>
        <end position="60"/>
    </location>
</feature>
<feature type="strand" evidence="10">
    <location>
        <begin position="69"/>
        <end position="71"/>
    </location>
</feature>
<feature type="helix" evidence="10">
    <location>
        <begin position="75"/>
        <end position="86"/>
    </location>
</feature>
<feature type="helix" evidence="10">
    <location>
        <begin position="93"/>
        <end position="96"/>
    </location>
</feature>
<feature type="turn" evidence="10">
    <location>
        <begin position="97"/>
        <end position="99"/>
    </location>
</feature>
<feature type="turn" evidence="10">
    <location>
        <begin position="102"/>
        <end position="104"/>
    </location>
</feature>
<feature type="helix" evidence="10">
    <location>
        <begin position="105"/>
        <end position="107"/>
    </location>
</feature>
<feature type="helix" evidence="10">
    <location>
        <begin position="109"/>
        <end position="114"/>
    </location>
</feature>
<feature type="strand" evidence="9">
    <location>
        <begin position="118"/>
        <end position="120"/>
    </location>
</feature>
<feature type="helix" evidence="10">
    <location>
        <begin position="129"/>
        <end position="134"/>
    </location>
</feature>
<feature type="helix" evidence="10">
    <location>
        <begin position="154"/>
        <end position="164"/>
    </location>
</feature>
<feature type="strand" evidence="10">
    <location>
        <begin position="172"/>
        <end position="174"/>
    </location>
</feature>
<feature type="turn" evidence="10">
    <location>
        <begin position="178"/>
        <end position="180"/>
    </location>
</feature>
<feature type="helix" evidence="10">
    <location>
        <begin position="181"/>
        <end position="183"/>
    </location>
</feature>
<feature type="strand" evidence="10">
    <location>
        <begin position="189"/>
        <end position="198"/>
    </location>
</feature>
<feature type="strand" evidence="10">
    <location>
        <begin position="201"/>
        <end position="212"/>
    </location>
</feature>
<feature type="turn" evidence="10">
    <location>
        <begin position="213"/>
        <end position="215"/>
    </location>
</feature>
<feature type="helix" evidence="10">
    <location>
        <begin position="216"/>
        <end position="235"/>
    </location>
</feature>
<feature type="strand" evidence="10">
    <location>
        <begin position="238"/>
        <end position="252"/>
    </location>
</feature>
<feature type="helix" evidence="10">
    <location>
        <begin position="253"/>
        <end position="255"/>
    </location>
</feature>
<feature type="helix" evidence="10">
    <location>
        <begin position="256"/>
        <end position="264"/>
    </location>
</feature>
<feature type="strand" evidence="10">
    <location>
        <begin position="272"/>
        <end position="275"/>
    </location>
</feature>
<feature type="helix" evidence="10">
    <location>
        <begin position="282"/>
        <end position="284"/>
    </location>
</feature>
<feature type="helix" evidence="10">
    <location>
        <begin position="287"/>
        <end position="289"/>
    </location>
</feature>
<feature type="strand" evidence="10">
    <location>
        <begin position="290"/>
        <end position="293"/>
    </location>
</feature>
<accession>P45352</accession>
<accession>A0JN23</accession>
<evidence type="ECO:0000250" key="1">
    <source>
        <dbReference type="UniProtKB" id="P04818"/>
    </source>
</evidence>
<evidence type="ECO:0000250" key="2">
    <source>
        <dbReference type="UniProtKB" id="P0A884"/>
    </source>
</evidence>
<evidence type="ECO:0000256" key="3">
    <source>
        <dbReference type="SAM" id="MobiDB-lite"/>
    </source>
</evidence>
<evidence type="ECO:0000269" key="4">
    <source>
    </source>
</evidence>
<evidence type="ECO:0000305" key="5"/>
<evidence type="ECO:0000305" key="6">
    <source>
    </source>
</evidence>
<evidence type="ECO:0007744" key="7">
    <source>
        <dbReference type="PDB" id="1RTS"/>
    </source>
</evidence>
<evidence type="ECO:0007744" key="8">
    <source>
        <dbReference type="PDB" id="2TSR"/>
    </source>
</evidence>
<evidence type="ECO:0007829" key="9">
    <source>
        <dbReference type="PDB" id="1RTS"/>
    </source>
</evidence>
<evidence type="ECO:0007829" key="10">
    <source>
        <dbReference type="PDB" id="2TSR"/>
    </source>
</evidence>
<gene>
    <name type="primary">Tyms</name>
</gene>
<protein>
    <recommendedName>
        <fullName>Thymidylate synthase</fullName>
        <shortName>TS</shortName>
        <shortName>TSase</shortName>
        <ecNumber evidence="6">2.1.1.45</ecNumber>
    </recommendedName>
</protein>
<reference key="1">
    <citation type="journal article" date="1995" name="Biochim. Biophys. Acta">
        <title>Isolation and expression of rat thymidylate synthase cDNA: phylogenetic comparison with human and mouse thymidylate synthases.</title>
        <authorList>
            <person name="Ciesla J."/>
            <person name="Weiner K.X."/>
            <person name="Weiner R.S."/>
            <person name="Reston J.T."/>
            <person name="Maley G.F."/>
            <person name="Maley F."/>
        </authorList>
    </citation>
    <scope>NUCLEOTIDE SEQUENCE [MRNA]</scope>
</reference>
<reference key="2">
    <citation type="journal article" date="2004" name="Genome Res.">
        <title>The status, quality, and expansion of the NIH full-length cDNA project: the Mammalian Gene Collection (MGC).</title>
        <authorList>
            <consortium name="The MGC Project Team"/>
        </authorList>
    </citation>
    <scope>NUCLEOTIDE SEQUENCE [LARGE SCALE MRNA]</scope>
    <source>
        <tissue>Brain</tissue>
    </source>
</reference>
<reference evidence="7 8" key="3">
    <citation type="journal article" date="1999" name="Biochemistry">
        <title>Crystal structures of rat thymidylate synthase inhibited by Tomudex, a potent anticancer drug.</title>
        <authorList>
            <person name="Sotelo-Mundo R.R."/>
            <person name="Ciesla J."/>
            <person name="Dzik J.M."/>
            <person name="Rode W."/>
            <person name="Maley F."/>
            <person name="Maley G.F."/>
            <person name="Hardy L.W."/>
            <person name="Montfort W.R."/>
        </authorList>
    </citation>
    <scope>X-RAY CRYSTALLOGRAPHY (2.60 ANGSTROMS) IN COMPLEX WITH DUMP</scope>
    <scope>CATALYTIC ACTIVITY</scope>
    <scope>SUBUNIT</scope>
    <scope>FUNCTION</scope>
</reference>
<sequence length="307" mass="35017">MLVEGSELQSGAQQPRTEAPQHGELQYLRQVEHIMRCGFKKEDRTGTGTLSVFGMQARYSLRDEFPLLTTKRVFWKGVLEELLWFIKGSTNAKELSSKGVRIWDANGSRDFLDSLGFSARQEGDLGPVYGFQWRHFGADYKDMDSDYSGQGVDQLQKVIDTIKTNPDDRRIIMCAWNPKDLPLMALPPCHALCQFYVVNGELSCQLYQRSGDMGLGVPFNIASYALLTYMIAHITGLQPGDFVHTLGDAHIYLNHIEPLKIQLQREPRPFPKLRILRKVETIDDFKVEDFQIEGYNPHPTIKMEMAV</sequence>
<name>TYSY_RAT</name>
<keyword id="KW-0002">3D-structure</keyword>
<keyword id="KW-0963">Cytoplasm</keyword>
<keyword id="KW-1017">Isopeptide bond</keyword>
<keyword id="KW-0472">Membrane</keyword>
<keyword id="KW-0489">Methyltransferase</keyword>
<keyword id="KW-0496">Mitochondrion</keyword>
<keyword id="KW-0999">Mitochondrion inner membrane</keyword>
<keyword id="KW-0545">Nucleotide biosynthesis</keyword>
<keyword id="KW-0539">Nucleus</keyword>
<keyword id="KW-0597">Phosphoprotein</keyword>
<keyword id="KW-1185">Reference proteome</keyword>
<keyword id="KW-0808">Transferase</keyword>
<keyword id="KW-0832">Ubl conjugation</keyword>